<feature type="chain" id="PRO_0000286689" description="HTH-type transcriptional regulator SAB2452">
    <location>
        <begin position="1"/>
        <end position="185"/>
    </location>
</feature>
<feature type="domain" description="HTH tetR-type" evidence="1">
    <location>
        <begin position="6"/>
        <end position="66"/>
    </location>
</feature>
<feature type="DNA-binding region" description="H-T-H motif" evidence="1">
    <location>
        <begin position="29"/>
        <end position="48"/>
    </location>
</feature>
<name>Y2452_STAAB</name>
<dbReference type="EMBL" id="AJ938182">
    <property type="protein sequence ID" value="CAI82140.1"/>
    <property type="molecule type" value="Genomic_DNA"/>
</dbReference>
<dbReference type="RefSeq" id="WP_001224177.1">
    <property type="nucleotide sequence ID" value="NC_007622.1"/>
</dbReference>
<dbReference type="SMR" id="Q2YWD0"/>
<dbReference type="KEGG" id="sab:SAB2452"/>
<dbReference type="HOGENOM" id="CLU_069356_17_2_9"/>
<dbReference type="GO" id="GO:0003677">
    <property type="term" value="F:DNA binding"/>
    <property type="evidence" value="ECO:0007669"/>
    <property type="project" value="UniProtKB-KW"/>
</dbReference>
<dbReference type="Gene3D" id="1.10.357.10">
    <property type="entry name" value="Tetracycline Repressor, domain 2"/>
    <property type="match status" value="1"/>
</dbReference>
<dbReference type="InterPro" id="IPR023772">
    <property type="entry name" value="DNA-bd_HTH_TetR-type_CS"/>
</dbReference>
<dbReference type="InterPro" id="IPR009057">
    <property type="entry name" value="Homeodomain-like_sf"/>
</dbReference>
<dbReference type="InterPro" id="IPR050624">
    <property type="entry name" value="HTH-type_Tx_Regulator"/>
</dbReference>
<dbReference type="InterPro" id="IPR001647">
    <property type="entry name" value="HTH_TetR"/>
</dbReference>
<dbReference type="PANTHER" id="PTHR43479">
    <property type="entry name" value="ACREF/ENVCD OPERON REPRESSOR-RELATED"/>
    <property type="match status" value="1"/>
</dbReference>
<dbReference type="PANTHER" id="PTHR43479:SF11">
    <property type="entry name" value="ACREF_ENVCD OPERON REPRESSOR-RELATED"/>
    <property type="match status" value="1"/>
</dbReference>
<dbReference type="Pfam" id="PF00440">
    <property type="entry name" value="TetR_N"/>
    <property type="match status" value="1"/>
</dbReference>
<dbReference type="PRINTS" id="PR00455">
    <property type="entry name" value="HTHTETR"/>
</dbReference>
<dbReference type="SUPFAM" id="SSF46689">
    <property type="entry name" value="Homeodomain-like"/>
    <property type="match status" value="1"/>
</dbReference>
<dbReference type="PROSITE" id="PS01081">
    <property type="entry name" value="HTH_TETR_1"/>
    <property type="match status" value="1"/>
</dbReference>
<dbReference type="PROSITE" id="PS50977">
    <property type="entry name" value="HTH_TETR_2"/>
    <property type="match status" value="1"/>
</dbReference>
<sequence length="185" mass="22315">MRKDAIENRQRIEEIAHKLFDEEGVENISMNRIAKELGIGMGTLYRHFKDKSDLCFYVIQRDLNTFITQFKQIKDDYHSDYEVMKVSLDYLLQFKIDNKTLLHCIEAGNNKLRFYQSAFYQELFDFYYDLFKSDDDIFTKFKTDMLLQSLSTSVFAFQIEHRHISIEAYRNYLLNIYLDEVERND</sequence>
<accession>Q2YWD0</accession>
<evidence type="ECO:0000255" key="1">
    <source>
        <dbReference type="PROSITE-ProRule" id="PRU00335"/>
    </source>
</evidence>
<organism>
    <name type="scientific">Staphylococcus aureus (strain bovine RF122 / ET3-1)</name>
    <dbReference type="NCBI Taxonomy" id="273036"/>
    <lineage>
        <taxon>Bacteria</taxon>
        <taxon>Bacillati</taxon>
        <taxon>Bacillota</taxon>
        <taxon>Bacilli</taxon>
        <taxon>Bacillales</taxon>
        <taxon>Staphylococcaceae</taxon>
        <taxon>Staphylococcus</taxon>
    </lineage>
</organism>
<reference key="1">
    <citation type="journal article" date="2007" name="PLoS ONE">
        <title>Molecular correlates of host specialization in Staphylococcus aureus.</title>
        <authorList>
            <person name="Herron-Olson L."/>
            <person name="Fitzgerald J.R."/>
            <person name="Musser J.M."/>
            <person name="Kapur V."/>
        </authorList>
    </citation>
    <scope>NUCLEOTIDE SEQUENCE [LARGE SCALE GENOMIC DNA]</scope>
    <source>
        <strain>bovine RF122 / ET3-1</strain>
    </source>
</reference>
<protein>
    <recommendedName>
        <fullName>HTH-type transcriptional regulator SAB2452</fullName>
    </recommendedName>
</protein>
<proteinExistence type="predicted"/>
<keyword id="KW-0238">DNA-binding</keyword>
<keyword id="KW-0804">Transcription</keyword>
<keyword id="KW-0805">Transcription regulation</keyword>
<gene>
    <name type="ordered locus">SAB2452</name>
</gene>